<name>RNY_LISW6</name>
<keyword id="KW-1003">Cell membrane</keyword>
<keyword id="KW-0255">Endonuclease</keyword>
<keyword id="KW-0378">Hydrolase</keyword>
<keyword id="KW-0472">Membrane</keyword>
<keyword id="KW-0540">Nuclease</keyword>
<keyword id="KW-0694">RNA-binding</keyword>
<keyword id="KW-0812">Transmembrane</keyword>
<keyword id="KW-1133">Transmembrane helix</keyword>
<accession>A0AIK1</accession>
<comment type="function">
    <text evidence="1">Endoribonuclease that initiates mRNA decay.</text>
</comment>
<comment type="subcellular location">
    <subcellularLocation>
        <location evidence="1">Cell membrane</location>
        <topology evidence="1">Single-pass membrane protein</topology>
    </subcellularLocation>
</comment>
<comment type="similarity">
    <text evidence="1">Belongs to the RNase Y family.</text>
</comment>
<reference key="1">
    <citation type="journal article" date="2006" name="J. Bacteriol.">
        <title>Whole-genome sequence of Listeria welshimeri reveals common steps in genome reduction with Listeria innocua as compared to Listeria monocytogenes.</title>
        <authorList>
            <person name="Hain T."/>
            <person name="Steinweg C."/>
            <person name="Kuenne C.T."/>
            <person name="Billion A."/>
            <person name="Ghai R."/>
            <person name="Chatterjee S.S."/>
            <person name="Domann E."/>
            <person name="Kaerst U."/>
            <person name="Goesmann A."/>
            <person name="Bekel T."/>
            <person name="Bartels D."/>
            <person name="Kaiser O."/>
            <person name="Meyer F."/>
            <person name="Puehler A."/>
            <person name="Weisshaar B."/>
            <person name="Wehland J."/>
            <person name="Liang C."/>
            <person name="Dandekar T."/>
            <person name="Lampidis R."/>
            <person name="Kreft J."/>
            <person name="Goebel W."/>
            <person name="Chakraborty T."/>
        </authorList>
    </citation>
    <scope>NUCLEOTIDE SEQUENCE [LARGE SCALE GENOMIC DNA]</scope>
    <source>
        <strain>ATCC 35897 / DSM 20650 / CCUG 15529 / CIP 8149 / NCTC 11857 / SLCC 5334 / V8</strain>
    </source>
</reference>
<sequence length="520" mass="58318">MTIAITIISSLLFLIVGLVVGSLIFKSSTEKKLAAARGTAELIVEDAKKEAETTKKEALLEAKEENHRLRTEIENELRGRRTETQKAENRLLQREENLDRKDTSLSKREATLERKEESISKRQQQIEEKESKLAEMIQAEQTELERISALSKEEAKSIILNQVEDELTHDTAIMVKETENRAKEESDKKAKNILSLAIQRCAADHVAETTVSVVTLPNDEMKGRIIGREGRNIRTLETLTGIDLIIDDTPEAVILSGFDPIRREIARIALEKLVQDGRIHPARIEEMVDKARKEVDEHIREVGEQATFEVGIHSIHPDLIKILGRLRYRTSYGQNVLNHSLEVSKLAGILAGELGEDVTLAKRAGLLHDIGKAIDHEIEGSHVEIGVELATKYKENDVVINSIASHHGDTEATSVIAVLVAAADALSAARPGARSETLENYIRRLEKLEEISESYDGVEKSYAIQAGREVRIIVEPDTIDDLSSYRLARDIRKRIEEELDYPGHIKVTVIRETRAVEYAK</sequence>
<gene>
    <name evidence="1" type="primary">rny</name>
    <name type="ordered locus">lwe1415</name>
</gene>
<protein>
    <recommendedName>
        <fullName evidence="1">Ribonuclease Y</fullName>
        <shortName evidence="1">RNase Y</shortName>
        <ecNumber evidence="1">3.1.-.-</ecNumber>
    </recommendedName>
</protein>
<proteinExistence type="inferred from homology"/>
<dbReference type="EC" id="3.1.-.-" evidence="1"/>
<dbReference type="EMBL" id="AM263198">
    <property type="protein sequence ID" value="CAK20833.1"/>
    <property type="molecule type" value="Genomic_DNA"/>
</dbReference>
<dbReference type="RefSeq" id="WP_011702211.1">
    <property type="nucleotide sequence ID" value="NC_008555.1"/>
</dbReference>
<dbReference type="SMR" id="A0AIK1"/>
<dbReference type="STRING" id="386043.lwe1415"/>
<dbReference type="GeneID" id="61189291"/>
<dbReference type="KEGG" id="lwe:lwe1415"/>
<dbReference type="eggNOG" id="COG1418">
    <property type="taxonomic scope" value="Bacteria"/>
</dbReference>
<dbReference type="HOGENOM" id="CLU_028328_1_0_9"/>
<dbReference type="OrthoDB" id="9803205at2"/>
<dbReference type="Proteomes" id="UP000000779">
    <property type="component" value="Chromosome"/>
</dbReference>
<dbReference type="GO" id="GO:0005886">
    <property type="term" value="C:plasma membrane"/>
    <property type="evidence" value="ECO:0007669"/>
    <property type="project" value="UniProtKB-SubCell"/>
</dbReference>
<dbReference type="GO" id="GO:0003723">
    <property type="term" value="F:RNA binding"/>
    <property type="evidence" value="ECO:0007669"/>
    <property type="project" value="UniProtKB-UniRule"/>
</dbReference>
<dbReference type="GO" id="GO:0004521">
    <property type="term" value="F:RNA endonuclease activity"/>
    <property type="evidence" value="ECO:0007669"/>
    <property type="project" value="UniProtKB-UniRule"/>
</dbReference>
<dbReference type="GO" id="GO:0006402">
    <property type="term" value="P:mRNA catabolic process"/>
    <property type="evidence" value="ECO:0007669"/>
    <property type="project" value="UniProtKB-UniRule"/>
</dbReference>
<dbReference type="CDD" id="cd00077">
    <property type="entry name" value="HDc"/>
    <property type="match status" value="1"/>
</dbReference>
<dbReference type="CDD" id="cd22431">
    <property type="entry name" value="KH-I_RNaseY"/>
    <property type="match status" value="1"/>
</dbReference>
<dbReference type="FunFam" id="1.10.3210.10:FF:000003">
    <property type="entry name" value="Ribonuclease Y"/>
    <property type="match status" value="1"/>
</dbReference>
<dbReference type="FunFam" id="3.30.1370.10:FF:000006">
    <property type="entry name" value="Ribonuclease Y"/>
    <property type="match status" value="1"/>
</dbReference>
<dbReference type="Gene3D" id="1.10.3210.10">
    <property type="entry name" value="Hypothetical protein af1432"/>
    <property type="match status" value="1"/>
</dbReference>
<dbReference type="Gene3D" id="3.30.1370.10">
    <property type="entry name" value="K Homology domain, type 1"/>
    <property type="match status" value="1"/>
</dbReference>
<dbReference type="HAMAP" id="MF_00335">
    <property type="entry name" value="RNase_Y"/>
    <property type="match status" value="1"/>
</dbReference>
<dbReference type="InterPro" id="IPR003607">
    <property type="entry name" value="HD/PDEase_dom"/>
</dbReference>
<dbReference type="InterPro" id="IPR006674">
    <property type="entry name" value="HD_domain"/>
</dbReference>
<dbReference type="InterPro" id="IPR006675">
    <property type="entry name" value="HDIG_dom"/>
</dbReference>
<dbReference type="InterPro" id="IPR004087">
    <property type="entry name" value="KH_dom"/>
</dbReference>
<dbReference type="InterPro" id="IPR004088">
    <property type="entry name" value="KH_dom_type_1"/>
</dbReference>
<dbReference type="InterPro" id="IPR036612">
    <property type="entry name" value="KH_dom_type_1_sf"/>
</dbReference>
<dbReference type="InterPro" id="IPR017705">
    <property type="entry name" value="Ribonuclease_Y"/>
</dbReference>
<dbReference type="InterPro" id="IPR022711">
    <property type="entry name" value="RNase_Y_N"/>
</dbReference>
<dbReference type="NCBIfam" id="TIGR00277">
    <property type="entry name" value="HDIG"/>
    <property type="match status" value="1"/>
</dbReference>
<dbReference type="NCBIfam" id="TIGR03319">
    <property type="entry name" value="RNase_Y"/>
    <property type="match status" value="1"/>
</dbReference>
<dbReference type="PANTHER" id="PTHR12826">
    <property type="entry name" value="RIBONUCLEASE Y"/>
    <property type="match status" value="1"/>
</dbReference>
<dbReference type="PANTHER" id="PTHR12826:SF15">
    <property type="entry name" value="RIBONUCLEASE Y"/>
    <property type="match status" value="1"/>
</dbReference>
<dbReference type="Pfam" id="PF01966">
    <property type="entry name" value="HD"/>
    <property type="match status" value="1"/>
</dbReference>
<dbReference type="Pfam" id="PF00013">
    <property type="entry name" value="KH_1"/>
    <property type="match status" value="1"/>
</dbReference>
<dbReference type="Pfam" id="PF12072">
    <property type="entry name" value="RNase_Y_N"/>
    <property type="match status" value="1"/>
</dbReference>
<dbReference type="SMART" id="SM00471">
    <property type="entry name" value="HDc"/>
    <property type="match status" value="1"/>
</dbReference>
<dbReference type="SMART" id="SM00322">
    <property type="entry name" value="KH"/>
    <property type="match status" value="1"/>
</dbReference>
<dbReference type="SUPFAM" id="SSF54791">
    <property type="entry name" value="Eukaryotic type KH-domain (KH-domain type I)"/>
    <property type="match status" value="1"/>
</dbReference>
<dbReference type="SUPFAM" id="SSF109604">
    <property type="entry name" value="HD-domain/PDEase-like"/>
    <property type="match status" value="1"/>
</dbReference>
<dbReference type="PROSITE" id="PS51831">
    <property type="entry name" value="HD"/>
    <property type="match status" value="1"/>
</dbReference>
<dbReference type="PROSITE" id="PS50084">
    <property type="entry name" value="KH_TYPE_1"/>
    <property type="match status" value="1"/>
</dbReference>
<evidence type="ECO:0000255" key="1">
    <source>
        <dbReference type="HAMAP-Rule" id="MF_00335"/>
    </source>
</evidence>
<evidence type="ECO:0000255" key="2">
    <source>
        <dbReference type="PROSITE-ProRule" id="PRU01175"/>
    </source>
</evidence>
<evidence type="ECO:0000256" key="3">
    <source>
        <dbReference type="SAM" id="MobiDB-lite"/>
    </source>
</evidence>
<organism>
    <name type="scientific">Listeria welshimeri serovar 6b (strain ATCC 35897 / DSM 20650 / CCUG 15529 / CIP 8149 / NCTC 11857 / SLCC 5334 / V8)</name>
    <dbReference type="NCBI Taxonomy" id="386043"/>
    <lineage>
        <taxon>Bacteria</taxon>
        <taxon>Bacillati</taxon>
        <taxon>Bacillota</taxon>
        <taxon>Bacilli</taxon>
        <taxon>Bacillales</taxon>
        <taxon>Listeriaceae</taxon>
        <taxon>Listeria</taxon>
    </lineage>
</organism>
<feature type="chain" id="PRO_1000079268" description="Ribonuclease Y">
    <location>
        <begin position="1"/>
        <end position="520"/>
    </location>
</feature>
<feature type="transmembrane region" description="Helical" evidence="1">
    <location>
        <begin position="5"/>
        <end position="25"/>
    </location>
</feature>
<feature type="domain" description="KH" evidence="1">
    <location>
        <begin position="210"/>
        <end position="273"/>
    </location>
</feature>
<feature type="domain" description="HD" evidence="2">
    <location>
        <begin position="336"/>
        <end position="429"/>
    </location>
</feature>
<feature type="region of interest" description="Disordered" evidence="3">
    <location>
        <begin position="70"/>
        <end position="127"/>
    </location>
</feature>